<organism>
    <name type="scientific">Vibrio cholerae serotype O1 (strain ATCC 39541 / Classical Ogawa 395 / O395)</name>
    <dbReference type="NCBI Taxonomy" id="345073"/>
    <lineage>
        <taxon>Bacteria</taxon>
        <taxon>Pseudomonadati</taxon>
        <taxon>Pseudomonadota</taxon>
        <taxon>Gammaproteobacteria</taxon>
        <taxon>Vibrionales</taxon>
        <taxon>Vibrionaceae</taxon>
        <taxon>Vibrio</taxon>
    </lineage>
</organism>
<gene>
    <name evidence="1 5" type="primary">nqrB</name>
    <name evidence="7" type="ordered locus">VC0395_A1883</name>
    <name evidence="8" type="ordered locus">VC395_2410</name>
</gene>
<protein>
    <recommendedName>
        <fullName evidence="1">Na(+)-translocating NADH-quinone reductase subunit B</fullName>
        <shortName evidence="1">Na(+)-NQR subunit B</shortName>
        <shortName evidence="1">Na(+)-translocating NQR subunit B</shortName>
        <ecNumber evidence="1 2">7.2.1.1</ecNumber>
    </recommendedName>
    <alternativeName>
        <fullName evidence="1">NQR complex subunit B</fullName>
    </alternativeName>
    <alternativeName>
        <fullName evidence="1">NQR-1 subunit B</fullName>
    </alternativeName>
</protein>
<name>NQRB_VIBC3</name>
<dbReference type="EC" id="7.2.1.1" evidence="1 2"/>
<dbReference type="EMBL" id="CP000627">
    <property type="protein sequence ID" value="ABQ21010.1"/>
    <property type="molecule type" value="Genomic_DNA"/>
</dbReference>
<dbReference type="EMBL" id="CP001235">
    <property type="protein sequence ID" value="ACP10400.1"/>
    <property type="status" value="ALT_INIT"/>
    <property type="molecule type" value="Genomic_DNA"/>
</dbReference>
<dbReference type="RefSeq" id="WP_000523294.1">
    <property type="nucleotide sequence ID" value="NZ_JAACZH010000008.1"/>
</dbReference>
<dbReference type="PDB" id="7XK3">
    <property type="method" value="EM"/>
    <property type="resolution" value="3.10 A"/>
    <property type="chains" value="B=1-415"/>
</dbReference>
<dbReference type="PDB" id="7XK4">
    <property type="method" value="EM"/>
    <property type="resolution" value="3.10 A"/>
    <property type="chains" value="B=1-415"/>
</dbReference>
<dbReference type="PDB" id="7XK5">
    <property type="method" value="EM"/>
    <property type="resolution" value="3.10 A"/>
    <property type="chains" value="B=1-415"/>
</dbReference>
<dbReference type="PDB" id="7XK6">
    <property type="method" value="EM"/>
    <property type="resolution" value="3.00 A"/>
    <property type="chains" value="B=1-415"/>
</dbReference>
<dbReference type="PDB" id="7XK7">
    <property type="method" value="EM"/>
    <property type="resolution" value="2.90 A"/>
    <property type="chains" value="B=1-415"/>
</dbReference>
<dbReference type="PDB" id="8A1T">
    <property type="method" value="EM"/>
    <property type="resolution" value="3.37 A"/>
    <property type="chains" value="B=1-415"/>
</dbReference>
<dbReference type="PDB" id="8A1V">
    <property type="method" value="EM"/>
    <property type="resolution" value="2.73 A"/>
    <property type="chains" value="B=1-415"/>
</dbReference>
<dbReference type="PDB" id="8A1W">
    <property type="method" value="EM"/>
    <property type="resolution" value="2.56 A"/>
    <property type="chains" value="B=1-415"/>
</dbReference>
<dbReference type="PDB" id="8A1X">
    <property type="method" value="EM"/>
    <property type="resolution" value="3.20 A"/>
    <property type="chains" value="B=1-415"/>
</dbReference>
<dbReference type="PDB" id="8A1Y">
    <property type="method" value="EM"/>
    <property type="resolution" value="3.30 A"/>
    <property type="chains" value="B=1-415"/>
</dbReference>
<dbReference type="PDB" id="8ACW">
    <property type="method" value="X-ray"/>
    <property type="resolution" value="3.40 A"/>
    <property type="chains" value="B=1-415"/>
</dbReference>
<dbReference type="PDB" id="8AD0">
    <property type="method" value="X-ray"/>
    <property type="resolution" value="3.11 A"/>
    <property type="chains" value="B=1-415"/>
</dbReference>
<dbReference type="PDB" id="8EW3">
    <property type="method" value="EM"/>
    <property type="resolution" value="2.65 A"/>
    <property type="chains" value="B=1-415"/>
</dbReference>
<dbReference type="PDBsum" id="7XK3"/>
<dbReference type="PDBsum" id="7XK4"/>
<dbReference type="PDBsum" id="7XK5"/>
<dbReference type="PDBsum" id="7XK6"/>
<dbReference type="PDBsum" id="7XK7"/>
<dbReference type="PDBsum" id="8A1T"/>
<dbReference type="PDBsum" id="8A1V"/>
<dbReference type="PDBsum" id="8A1W"/>
<dbReference type="PDBsum" id="8A1X"/>
<dbReference type="PDBsum" id="8A1Y"/>
<dbReference type="PDBsum" id="8ACW"/>
<dbReference type="PDBsum" id="8AD0"/>
<dbReference type="PDBsum" id="8EW3"/>
<dbReference type="EMDB" id="EMD-33242"/>
<dbReference type="EMDB" id="EMD-33243"/>
<dbReference type="EMDB" id="EMD-33244"/>
<dbReference type="EMDB" id="EMD-33245"/>
<dbReference type="EMDB" id="EMD-33246"/>
<dbReference type="SMR" id="A5F5X0"/>
<dbReference type="KEGG" id="vco:VC0395_A1883"/>
<dbReference type="KEGG" id="vcr:VC395_2410"/>
<dbReference type="PATRIC" id="fig|345073.21.peg.2323"/>
<dbReference type="eggNOG" id="COG1805">
    <property type="taxonomic scope" value="Bacteria"/>
</dbReference>
<dbReference type="HOGENOM" id="CLU_042020_1_1_6"/>
<dbReference type="OrthoDB" id="9776359at2"/>
<dbReference type="BRENDA" id="7.2.1.1">
    <property type="organism ID" value="15862"/>
</dbReference>
<dbReference type="Proteomes" id="UP000000249">
    <property type="component" value="Chromosome 2"/>
</dbReference>
<dbReference type="GO" id="GO:0005886">
    <property type="term" value="C:plasma membrane"/>
    <property type="evidence" value="ECO:0007669"/>
    <property type="project" value="UniProtKB-SubCell"/>
</dbReference>
<dbReference type="GO" id="GO:0010181">
    <property type="term" value="F:FMN binding"/>
    <property type="evidence" value="ECO:0000314"/>
    <property type="project" value="UniProtKB"/>
</dbReference>
<dbReference type="GO" id="GO:0016655">
    <property type="term" value="F:oxidoreductase activity, acting on NAD(P)H, quinone or similar compound as acceptor"/>
    <property type="evidence" value="ECO:0000314"/>
    <property type="project" value="UniProtKB"/>
</dbReference>
<dbReference type="GO" id="GO:1902444">
    <property type="term" value="F:riboflavin binding"/>
    <property type="evidence" value="ECO:0000314"/>
    <property type="project" value="UniProtKB"/>
</dbReference>
<dbReference type="GO" id="GO:0022904">
    <property type="term" value="P:respiratory electron transport chain"/>
    <property type="evidence" value="ECO:0007669"/>
    <property type="project" value="InterPro"/>
</dbReference>
<dbReference type="GO" id="GO:0006814">
    <property type="term" value="P:sodium ion transport"/>
    <property type="evidence" value="ECO:0000314"/>
    <property type="project" value="UniProtKB"/>
</dbReference>
<dbReference type="GO" id="GO:0055085">
    <property type="term" value="P:transmembrane transport"/>
    <property type="evidence" value="ECO:0007669"/>
    <property type="project" value="InterPro"/>
</dbReference>
<dbReference type="HAMAP" id="MF_00426">
    <property type="entry name" value="NqrB"/>
    <property type="match status" value="1"/>
</dbReference>
<dbReference type="InterPro" id="IPR010966">
    <property type="entry name" value="NqrB"/>
</dbReference>
<dbReference type="InterPro" id="IPR004338">
    <property type="entry name" value="NqrB/RnfD"/>
</dbReference>
<dbReference type="NCBIfam" id="TIGR01937">
    <property type="entry name" value="nqrB"/>
    <property type="match status" value="1"/>
</dbReference>
<dbReference type="NCBIfam" id="NF003756">
    <property type="entry name" value="PRK05349.1"/>
    <property type="match status" value="1"/>
</dbReference>
<dbReference type="PANTHER" id="PTHR30578">
    <property type="entry name" value="ELECTRON TRANSPORT COMPLEX PROTEIN RNFD"/>
    <property type="match status" value="1"/>
</dbReference>
<dbReference type="PANTHER" id="PTHR30578:SF1">
    <property type="entry name" value="NA(+)-TRANSLOCATING NADH-QUINONE REDUCTASE SUBUNIT B"/>
    <property type="match status" value="1"/>
</dbReference>
<dbReference type="Pfam" id="PF03116">
    <property type="entry name" value="NQR2_RnfD_RnfE"/>
    <property type="match status" value="1"/>
</dbReference>
<dbReference type="PIRSF" id="PIRSF016055">
    <property type="entry name" value="NADH-UbQ_OxRdtase_B_su"/>
    <property type="match status" value="1"/>
</dbReference>
<proteinExistence type="evidence at protein level"/>
<comment type="function">
    <text evidence="1">NQR complex catalyzes the reduction of ubiquinone-1 to ubiquinol by two successive reactions, coupled with the transport of Na(+) ions from the cytoplasm to the periplasm. NqrA to NqrE are probably involved in the second step, the conversion of ubisemiquinone to ubiquinol.</text>
</comment>
<comment type="catalytic activity">
    <reaction evidence="1 2">
        <text>a ubiquinone + n Na(+)(in) + NADH + H(+) = a ubiquinol + n Na(+)(out) + NAD(+)</text>
        <dbReference type="Rhea" id="RHEA:47748"/>
        <dbReference type="Rhea" id="RHEA-COMP:9565"/>
        <dbReference type="Rhea" id="RHEA-COMP:9566"/>
        <dbReference type="ChEBI" id="CHEBI:15378"/>
        <dbReference type="ChEBI" id="CHEBI:16389"/>
        <dbReference type="ChEBI" id="CHEBI:17976"/>
        <dbReference type="ChEBI" id="CHEBI:29101"/>
        <dbReference type="ChEBI" id="CHEBI:57540"/>
        <dbReference type="ChEBI" id="CHEBI:57945"/>
        <dbReference type="EC" id="7.2.1.1"/>
    </reaction>
</comment>
<comment type="cofactor">
    <cofactor evidence="3">
        <name>riboflavin</name>
        <dbReference type="ChEBI" id="CHEBI:57986"/>
    </cofactor>
</comment>
<comment type="cofactor">
    <cofactor evidence="1 2 3 4">
        <name>FMN</name>
        <dbReference type="ChEBI" id="CHEBI:58210"/>
    </cofactor>
</comment>
<comment type="subunit">
    <text evidence="1 2 3">Composed of six subunits; NqrA, NqrB, NqrC, NqrD, NqrE and NqrF.</text>
</comment>
<comment type="subcellular location">
    <subcellularLocation>
        <location evidence="1 6">Cell inner membrane</location>
        <topology evidence="1">Multi-pass membrane protein</topology>
    </subcellularLocation>
</comment>
<comment type="similarity">
    <text evidence="1 6">Belongs to the NqrB/RnfD family.</text>
</comment>
<comment type="sequence caution" evidence="6">
    <conflict type="erroneous initiation">
        <sequence resource="EMBL-CDS" id="ACP10400"/>
    </conflict>
    <text>Extended N-terminus.</text>
</comment>
<evidence type="ECO:0000255" key="1">
    <source>
        <dbReference type="HAMAP-Rule" id="MF_00426"/>
    </source>
</evidence>
<evidence type="ECO:0000269" key="2">
    <source>
    </source>
</evidence>
<evidence type="ECO:0000269" key="3">
    <source>
    </source>
</evidence>
<evidence type="ECO:0000269" key="4">
    <source>
    </source>
</evidence>
<evidence type="ECO:0000303" key="5">
    <source>
    </source>
</evidence>
<evidence type="ECO:0000305" key="6"/>
<evidence type="ECO:0000312" key="7">
    <source>
        <dbReference type="EMBL" id="ABQ21010.1"/>
    </source>
</evidence>
<evidence type="ECO:0000312" key="8">
    <source>
        <dbReference type="EMBL" id="ACP10400.1"/>
    </source>
</evidence>
<evidence type="ECO:0007829" key="9">
    <source>
        <dbReference type="PDB" id="7XK6"/>
    </source>
</evidence>
<evidence type="ECO:0007829" key="10">
    <source>
        <dbReference type="PDB" id="8A1W"/>
    </source>
</evidence>
<evidence type="ECO:0007829" key="11">
    <source>
        <dbReference type="PDB" id="8A1Y"/>
    </source>
</evidence>
<reference key="1">
    <citation type="submission" date="2007-03" db="EMBL/GenBank/DDBJ databases">
        <authorList>
            <person name="Heidelberg J."/>
        </authorList>
    </citation>
    <scope>NUCLEOTIDE SEQUENCE [LARGE SCALE GENOMIC DNA]</scope>
    <source>
        <strain>ATCC 39541 / Classical Ogawa 395 / O395</strain>
    </source>
</reference>
<reference key="2">
    <citation type="journal article" date="2008" name="PLoS ONE">
        <title>A recalibrated molecular clock and independent origins for the cholera pandemic clones.</title>
        <authorList>
            <person name="Feng L."/>
            <person name="Reeves P.R."/>
            <person name="Lan R."/>
            <person name="Ren Y."/>
            <person name="Gao C."/>
            <person name="Zhou Z."/>
            <person name="Ren Y."/>
            <person name="Cheng J."/>
            <person name="Wang W."/>
            <person name="Wang J."/>
            <person name="Qian W."/>
            <person name="Li D."/>
            <person name="Wang L."/>
        </authorList>
    </citation>
    <scope>NUCLEOTIDE SEQUENCE [LARGE SCALE GENOMIC DNA]</scope>
    <source>
        <strain>ATCC 39541 / Classical Ogawa 395 / O395</strain>
    </source>
</reference>
<reference key="3">
    <citation type="journal article" date="2002" name="Biochemistry">
        <title>Purification and characterization of the recombinant Na(+)-translocating NADH:quinone oxidoreductase from Vibrio cholerae.</title>
        <authorList>
            <person name="Barquera B."/>
            <person name="Hellwig P."/>
            <person name="Zhou W."/>
            <person name="Morgan J.E."/>
            <person name="Haese C.C."/>
            <person name="Gosink K.K."/>
            <person name="Nilges M."/>
            <person name="Bruesehoff P.J."/>
            <person name="Roth A."/>
            <person name="Lancaster C.R."/>
            <person name="Gennis R.B."/>
        </authorList>
    </citation>
    <scope>CATALYTIC ACTIVITY</scope>
    <scope>SUBUNIT</scope>
    <scope>COFACTOR</scope>
    <source>
        <strain>ATCC 39541 / Classical Ogawa 395 / O395</strain>
    </source>
</reference>
<reference key="4">
    <citation type="journal article" date="2010" name="J. Biol. Chem.">
        <title>Localization and function of the membrane-bound riboflavin in the Na+-translocating NADH:quinone oxidoreductase (Na+-NQR) from Vibrio cholerae.</title>
        <authorList>
            <person name="Casutt M.S."/>
            <person name="Huber T."/>
            <person name="Brunisholz R."/>
            <person name="Tao M."/>
            <person name="Fritz G."/>
            <person name="Steuber J."/>
        </authorList>
    </citation>
    <scope>COFACTOR</scope>
    <scope>SUBUNIT</scope>
    <scope>MUTAGENESIS OF PHE-185 AND TRP-226</scope>
    <source>
        <strain>ATCC 39541 / Classical Ogawa 395 / O395</strain>
    </source>
</reference>
<reference key="5">
    <citation type="journal article" date="2012" name="Biochim. Biophys. Acta">
        <title>The single NqrB and NqrC subunits in the Na(+)-translocating NADH: quinone oxidoreductase (Na(+)-NQR) from Vibrio cholerae each carry one covalently attached FMN.</title>
        <authorList>
            <person name="Casutt M.S."/>
            <person name="Schlosser A."/>
            <person name="Buckel W."/>
            <person name="Steuber J."/>
        </authorList>
    </citation>
    <scope>COFACTOR</scope>
    <scope>PROSTHETIC GROUP AT THR-236</scope>
</reference>
<accession>A5F5X0</accession>
<accession>C3M418</accession>
<feature type="chain" id="PRO_0000431655" description="Na(+)-translocating NADH-quinone reductase subunit B">
    <location>
        <begin position="1"/>
        <end position="415"/>
    </location>
</feature>
<feature type="transmembrane region" description="Helical" evidence="1">
    <location>
        <begin position="23"/>
        <end position="40"/>
    </location>
</feature>
<feature type="transmembrane region" description="Helical" evidence="1">
    <location>
        <begin position="56"/>
        <end position="76"/>
    </location>
</feature>
<feature type="transmembrane region" description="Helical" evidence="1">
    <location>
        <begin position="129"/>
        <end position="149"/>
    </location>
</feature>
<feature type="transmembrane region" description="Helical" evidence="1">
    <location>
        <begin position="164"/>
        <end position="184"/>
    </location>
</feature>
<feature type="transmembrane region" description="Helical" evidence="1">
    <location>
        <begin position="275"/>
        <end position="295"/>
    </location>
</feature>
<feature type="transmembrane region" description="Helical" evidence="1">
    <location>
        <begin position="297"/>
        <end position="317"/>
    </location>
</feature>
<feature type="transmembrane region" description="Helical" evidence="1">
    <location>
        <begin position="325"/>
        <end position="345"/>
    </location>
</feature>
<feature type="transmembrane region" description="Helical" evidence="1">
    <location>
        <begin position="358"/>
        <end position="378"/>
    </location>
</feature>
<feature type="transmembrane region" description="Helical" evidence="1">
    <location>
        <begin position="381"/>
        <end position="401"/>
    </location>
</feature>
<feature type="modified residue" description="FMN phosphoryl threonine" evidence="1 4">
    <location>
        <position position="236"/>
    </location>
</feature>
<feature type="mutagenesis site" description="Decreases riboflavin content." evidence="3">
    <original>F</original>
    <variation>A</variation>
    <location>
        <position position="185"/>
    </location>
</feature>
<feature type="mutagenesis site" description="Decreases riboflavin content." evidence="3">
    <original>W</original>
    <variation>L</variation>
    <location>
        <position position="226"/>
    </location>
</feature>
<feature type="helix" evidence="10">
    <location>
        <begin position="4"/>
        <end position="14"/>
    </location>
</feature>
<feature type="strand" evidence="10">
    <location>
        <begin position="15"/>
        <end position="19"/>
    </location>
</feature>
<feature type="helix" evidence="10">
    <location>
        <begin position="21"/>
        <end position="23"/>
    </location>
</feature>
<feature type="helix" evidence="10">
    <location>
        <begin position="24"/>
        <end position="34"/>
    </location>
</feature>
<feature type="strand" evidence="10">
    <location>
        <begin position="42"/>
        <end position="44"/>
    </location>
</feature>
<feature type="helix" evidence="10">
    <location>
        <begin position="53"/>
        <end position="63"/>
    </location>
</feature>
<feature type="helix" evidence="10">
    <location>
        <begin position="65"/>
        <end position="86"/>
    </location>
</feature>
<feature type="helix" evidence="10">
    <location>
        <begin position="90"/>
        <end position="97"/>
    </location>
</feature>
<feature type="helix" evidence="10">
    <location>
        <begin position="100"/>
        <end position="107"/>
    </location>
</feature>
<feature type="helix" evidence="10">
    <location>
        <begin position="118"/>
        <end position="151"/>
    </location>
</feature>
<feature type="helix" evidence="10">
    <location>
        <begin position="159"/>
        <end position="167"/>
    </location>
</feature>
<feature type="strand" evidence="11">
    <location>
        <begin position="168"/>
        <end position="170"/>
    </location>
</feature>
<feature type="helix" evidence="10">
    <location>
        <begin position="176"/>
        <end position="188"/>
    </location>
</feature>
<feature type="turn" evidence="10">
    <location>
        <begin position="189"/>
        <end position="191"/>
    </location>
</feature>
<feature type="helix" evidence="10">
    <location>
        <begin position="192"/>
        <end position="194"/>
    </location>
</feature>
<feature type="turn" evidence="9">
    <location>
        <begin position="197"/>
        <end position="199"/>
    </location>
</feature>
<feature type="helix" evidence="10">
    <location>
        <begin position="204"/>
        <end position="215"/>
    </location>
</feature>
<feature type="helix" evidence="10">
    <location>
        <begin position="217"/>
        <end position="220"/>
    </location>
</feature>
<feature type="strand" evidence="10">
    <location>
        <begin position="221"/>
        <end position="227"/>
    </location>
</feature>
<feature type="helix" evidence="10">
    <location>
        <begin position="237"/>
        <end position="244"/>
    </location>
</feature>
<feature type="helix" evidence="10">
    <location>
        <begin position="245"/>
        <end position="248"/>
    </location>
</feature>
<feature type="turn" evidence="10">
    <location>
        <begin position="252"/>
        <end position="255"/>
    </location>
</feature>
<feature type="helix" evidence="10">
    <location>
        <begin position="260"/>
        <end position="265"/>
    </location>
</feature>
<feature type="strand" evidence="10">
    <location>
        <begin position="268"/>
        <end position="271"/>
    </location>
</feature>
<feature type="turn" evidence="10">
    <location>
        <begin position="272"/>
        <end position="274"/>
    </location>
</feature>
<feature type="helix" evidence="10">
    <location>
        <begin position="277"/>
        <end position="289"/>
    </location>
</feature>
<feature type="helix" evidence="10">
    <location>
        <begin position="295"/>
        <end position="315"/>
    </location>
</feature>
<feature type="helix" evidence="10">
    <location>
        <begin position="321"/>
        <end position="324"/>
    </location>
</feature>
<feature type="helix" evidence="10">
    <location>
        <begin position="327"/>
        <end position="331"/>
    </location>
</feature>
<feature type="helix" evidence="10">
    <location>
        <begin position="336"/>
        <end position="342"/>
    </location>
</feature>
<feature type="turn" evidence="10">
    <location>
        <begin position="343"/>
        <end position="345"/>
    </location>
</feature>
<feature type="turn" evidence="10">
    <location>
        <begin position="347"/>
        <end position="349"/>
    </location>
</feature>
<feature type="helix" evidence="10">
    <location>
        <begin position="354"/>
        <end position="374"/>
    </location>
</feature>
<feature type="strand" evidence="11">
    <location>
        <begin position="376"/>
        <end position="379"/>
    </location>
</feature>
<feature type="helix" evidence="10">
    <location>
        <begin position="382"/>
        <end position="409"/>
    </location>
</feature>
<feature type="helix" evidence="10">
    <location>
        <begin position="411"/>
        <end position="413"/>
    </location>
</feature>
<keyword id="KW-0002">3D-structure</keyword>
<keyword id="KW-0997">Cell inner membrane</keyword>
<keyword id="KW-1003">Cell membrane</keyword>
<keyword id="KW-0285">Flavoprotein</keyword>
<keyword id="KW-0288">FMN</keyword>
<keyword id="KW-0406">Ion transport</keyword>
<keyword id="KW-0472">Membrane</keyword>
<keyword id="KW-0520">NAD</keyword>
<keyword id="KW-0597">Phosphoprotein</keyword>
<keyword id="KW-0915">Sodium</keyword>
<keyword id="KW-0739">Sodium transport</keyword>
<keyword id="KW-1278">Translocase</keyword>
<keyword id="KW-0812">Transmembrane</keyword>
<keyword id="KW-1133">Transmembrane helix</keyword>
<keyword id="KW-0813">Transport</keyword>
<keyword id="KW-0830">Ubiquinone</keyword>
<sequence length="415" mass="45357">MGLKKFLEDIEHHFEPGGKHEKWFALYEAAATLFYTPGLVTKRSSHVRDSVDLKRIMIMVWLAVFPAMFWGMYNAGGQAIAALNHLYSGDQLAAIVAGNWHYWLTEMLGGTMSSDAGWGSKMLLGATYFLPIYATVFIVGGFWEVLFCMVRKHEVNEGFFVTSILFALIVPPTLPLWQAALGITFGVVVAKEVFGGTGRNFLNPALAGRAFLFFAYPAQISGDLVWTAADGYSGATALSQWAQGGAGALINNATGQTITWMDAFIGNIPGSIGEVSTLALMIGAAFIVYMGIASWRIIGGVMIGMILLSTLFNVIGSDTNAMFNMPWHWHLVLGGFAFGMFFMATDPVSASFTNSGKWAYGILIGVMCVLIRVVNPAYPEGMMLAILFANLFAPLFDHVVVERNIKRRLARYGKQ</sequence>